<feature type="chain" id="PRO_0000156564" description="Homoserine kinase">
    <location>
        <begin position="1"/>
        <end position="309"/>
    </location>
</feature>
<feature type="binding site" evidence="1">
    <location>
        <begin position="95"/>
        <end position="105"/>
    </location>
    <ligand>
        <name>ATP</name>
        <dbReference type="ChEBI" id="CHEBI:30616"/>
    </ligand>
</feature>
<accession>Q8FQ44</accession>
<organism>
    <name type="scientific">Corynebacterium efficiens (strain DSM 44549 / YS-314 / AJ 12310 / JCM 11189 / NBRC 100395)</name>
    <dbReference type="NCBI Taxonomy" id="196164"/>
    <lineage>
        <taxon>Bacteria</taxon>
        <taxon>Bacillati</taxon>
        <taxon>Actinomycetota</taxon>
        <taxon>Actinomycetes</taxon>
        <taxon>Mycobacteriales</taxon>
        <taxon>Corynebacteriaceae</taxon>
        <taxon>Corynebacterium</taxon>
    </lineage>
</organism>
<protein>
    <recommendedName>
        <fullName evidence="1">Homoserine kinase</fullName>
        <shortName evidence="1">HK</shortName>
        <shortName evidence="1">HSK</shortName>
        <ecNumber evidence="1">2.7.1.39</ecNumber>
    </recommendedName>
</protein>
<sequence length="309" mass="32605">MAIELNVGRKVTVTVPGSSANLGPGFDTLGLALSVYDTVEVEIIQSGLEVEVFGEGQGEVPLDGSHLVVKAIRSGLKTADAEVPGLRVVCHNNIPQSRGLGSSAAAAVAGVAAANGLAGFPLTQEQVVQLASAFEGHPDNAAASVLGGAVVSWTNLPVDGKSQPEYSAVGLDVHEGIRATALVPDFHASTEAVRRVLPSDVTHIDARFNVSRVAVMIVALQQRPDLLWEGTRDRLHQPYRADVLPVTAEWVNRLRNRGYAAYLSGAGPTVMVLSTEPVSDKILDDAREAGLRVIELEVADPVRIEVVHE</sequence>
<comment type="function">
    <text evidence="1">Catalyzes the ATP-dependent phosphorylation of L-homoserine to L-homoserine phosphate.</text>
</comment>
<comment type="catalytic activity">
    <reaction evidence="1">
        <text>L-homoserine + ATP = O-phospho-L-homoserine + ADP + H(+)</text>
        <dbReference type="Rhea" id="RHEA:13985"/>
        <dbReference type="ChEBI" id="CHEBI:15378"/>
        <dbReference type="ChEBI" id="CHEBI:30616"/>
        <dbReference type="ChEBI" id="CHEBI:57476"/>
        <dbReference type="ChEBI" id="CHEBI:57590"/>
        <dbReference type="ChEBI" id="CHEBI:456216"/>
        <dbReference type="EC" id="2.7.1.39"/>
    </reaction>
</comment>
<comment type="pathway">
    <text evidence="1">Amino-acid biosynthesis; L-threonine biosynthesis; L-threonine from L-aspartate: step 4/5.</text>
</comment>
<comment type="subcellular location">
    <subcellularLocation>
        <location evidence="1">Cytoplasm</location>
    </subcellularLocation>
</comment>
<comment type="similarity">
    <text evidence="1">Belongs to the GHMP kinase family. Homoserine kinase subfamily.</text>
</comment>
<evidence type="ECO:0000255" key="1">
    <source>
        <dbReference type="HAMAP-Rule" id="MF_00384"/>
    </source>
</evidence>
<gene>
    <name evidence="1" type="primary">thrB</name>
    <name type="ordered locus">CE1290</name>
</gene>
<reference key="1">
    <citation type="journal article" date="2003" name="Genome Res.">
        <title>Comparative complete genome sequence analysis of the amino acid replacements responsible for the thermostability of Corynebacterium efficiens.</title>
        <authorList>
            <person name="Nishio Y."/>
            <person name="Nakamura Y."/>
            <person name="Kawarabayasi Y."/>
            <person name="Usuda Y."/>
            <person name="Kimura E."/>
            <person name="Sugimoto S."/>
            <person name="Matsui K."/>
            <person name="Yamagishi A."/>
            <person name="Kikuchi H."/>
            <person name="Ikeo K."/>
            <person name="Gojobori T."/>
        </authorList>
    </citation>
    <scope>NUCLEOTIDE SEQUENCE [LARGE SCALE GENOMIC DNA]</scope>
    <source>
        <strain>DSM 44549 / YS-314 / AJ 12310 / JCM 11189 / NBRC 100395</strain>
    </source>
</reference>
<proteinExistence type="inferred from homology"/>
<dbReference type="EC" id="2.7.1.39" evidence="1"/>
<dbReference type="EMBL" id="BA000035">
    <property type="protein sequence ID" value="BAC18100.1"/>
    <property type="molecule type" value="Genomic_DNA"/>
</dbReference>
<dbReference type="RefSeq" id="WP_006769252.1">
    <property type="nucleotide sequence ID" value="NC_004369.1"/>
</dbReference>
<dbReference type="SMR" id="Q8FQ44"/>
<dbReference type="STRING" id="196164.gene:10741699"/>
<dbReference type="KEGG" id="cef:CE1290"/>
<dbReference type="eggNOG" id="COG0083">
    <property type="taxonomic scope" value="Bacteria"/>
</dbReference>
<dbReference type="HOGENOM" id="CLU_041243_0_1_11"/>
<dbReference type="OrthoDB" id="9769912at2"/>
<dbReference type="UniPathway" id="UPA00050">
    <property type="reaction ID" value="UER00064"/>
</dbReference>
<dbReference type="Proteomes" id="UP000001409">
    <property type="component" value="Chromosome"/>
</dbReference>
<dbReference type="GO" id="GO:0005737">
    <property type="term" value="C:cytoplasm"/>
    <property type="evidence" value="ECO:0007669"/>
    <property type="project" value="UniProtKB-SubCell"/>
</dbReference>
<dbReference type="GO" id="GO:0005524">
    <property type="term" value="F:ATP binding"/>
    <property type="evidence" value="ECO:0007669"/>
    <property type="project" value="UniProtKB-UniRule"/>
</dbReference>
<dbReference type="GO" id="GO:0004413">
    <property type="term" value="F:homoserine kinase activity"/>
    <property type="evidence" value="ECO:0007669"/>
    <property type="project" value="UniProtKB-UniRule"/>
</dbReference>
<dbReference type="GO" id="GO:0009088">
    <property type="term" value="P:threonine biosynthetic process"/>
    <property type="evidence" value="ECO:0007669"/>
    <property type="project" value="UniProtKB-UniRule"/>
</dbReference>
<dbReference type="Gene3D" id="3.30.230.10">
    <property type="match status" value="1"/>
</dbReference>
<dbReference type="Gene3D" id="3.30.70.890">
    <property type="entry name" value="GHMP kinase, C-terminal domain"/>
    <property type="match status" value="1"/>
</dbReference>
<dbReference type="HAMAP" id="MF_00384">
    <property type="entry name" value="Homoser_kinase"/>
    <property type="match status" value="1"/>
</dbReference>
<dbReference type="InterPro" id="IPR013750">
    <property type="entry name" value="GHMP_kinase_C_dom"/>
</dbReference>
<dbReference type="InterPro" id="IPR036554">
    <property type="entry name" value="GHMP_kinase_C_sf"/>
</dbReference>
<dbReference type="InterPro" id="IPR006204">
    <property type="entry name" value="GHMP_kinase_N_dom"/>
</dbReference>
<dbReference type="InterPro" id="IPR006203">
    <property type="entry name" value="GHMP_knse_ATP-bd_CS"/>
</dbReference>
<dbReference type="InterPro" id="IPR000870">
    <property type="entry name" value="Homoserine_kinase"/>
</dbReference>
<dbReference type="InterPro" id="IPR020568">
    <property type="entry name" value="Ribosomal_Su5_D2-typ_SF"/>
</dbReference>
<dbReference type="InterPro" id="IPR014721">
    <property type="entry name" value="Ribsml_uS5_D2-typ_fold_subgr"/>
</dbReference>
<dbReference type="NCBIfam" id="TIGR00191">
    <property type="entry name" value="thrB"/>
    <property type="match status" value="1"/>
</dbReference>
<dbReference type="PANTHER" id="PTHR20861:SF1">
    <property type="entry name" value="HOMOSERINE KINASE"/>
    <property type="match status" value="1"/>
</dbReference>
<dbReference type="PANTHER" id="PTHR20861">
    <property type="entry name" value="HOMOSERINE/4-DIPHOSPHOCYTIDYL-2-C-METHYL-D-ERYTHRITOL KINASE"/>
    <property type="match status" value="1"/>
</dbReference>
<dbReference type="Pfam" id="PF08544">
    <property type="entry name" value="GHMP_kinases_C"/>
    <property type="match status" value="1"/>
</dbReference>
<dbReference type="Pfam" id="PF00288">
    <property type="entry name" value="GHMP_kinases_N"/>
    <property type="match status" value="1"/>
</dbReference>
<dbReference type="PIRSF" id="PIRSF000676">
    <property type="entry name" value="Homoser_kin"/>
    <property type="match status" value="1"/>
</dbReference>
<dbReference type="PRINTS" id="PR00958">
    <property type="entry name" value="HOMSERKINASE"/>
</dbReference>
<dbReference type="SUPFAM" id="SSF55060">
    <property type="entry name" value="GHMP Kinase, C-terminal domain"/>
    <property type="match status" value="1"/>
</dbReference>
<dbReference type="SUPFAM" id="SSF54211">
    <property type="entry name" value="Ribosomal protein S5 domain 2-like"/>
    <property type="match status" value="1"/>
</dbReference>
<dbReference type="PROSITE" id="PS00627">
    <property type="entry name" value="GHMP_KINASES_ATP"/>
    <property type="match status" value="1"/>
</dbReference>
<name>KHSE_COREF</name>
<keyword id="KW-0028">Amino-acid biosynthesis</keyword>
<keyword id="KW-0067">ATP-binding</keyword>
<keyword id="KW-0963">Cytoplasm</keyword>
<keyword id="KW-0418">Kinase</keyword>
<keyword id="KW-0547">Nucleotide-binding</keyword>
<keyword id="KW-1185">Reference proteome</keyword>
<keyword id="KW-0791">Threonine biosynthesis</keyword>
<keyword id="KW-0808">Transferase</keyword>